<organism evidence="13">
    <name type="scientific">Mus musculus</name>
    <name type="common">Mouse</name>
    <dbReference type="NCBI Taxonomy" id="10090"/>
    <lineage>
        <taxon>Eukaryota</taxon>
        <taxon>Metazoa</taxon>
        <taxon>Chordata</taxon>
        <taxon>Craniata</taxon>
        <taxon>Vertebrata</taxon>
        <taxon>Euteleostomi</taxon>
        <taxon>Mammalia</taxon>
        <taxon>Eutheria</taxon>
        <taxon>Euarchontoglires</taxon>
        <taxon>Glires</taxon>
        <taxon>Rodentia</taxon>
        <taxon>Myomorpha</taxon>
        <taxon>Muroidea</taxon>
        <taxon>Muridae</taxon>
        <taxon>Murinae</taxon>
        <taxon>Mus</taxon>
        <taxon>Mus</taxon>
    </lineage>
</organism>
<dbReference type="EC" id="2.3.2.27"/>
<dbReference type="EMBL" id="AF109174">
    <property type="protein sequence ID" value="AAF72040.1"/>
    <property type="molecule type" value="mRNA"/>
</dbReference>
<dbReference type="EMBL" id="BC025159">
    <property type="protein sequence ID" value="AAH25159.1"/>
    <property type="molecule type" value="mRNA"/>
</dbReference>
<dbReference type="CCDS" id="CCDS35992.1"/>
<dbReference type="RefSeq" id="NP_067476.2">
    <property type="nucleotide sequence ID" value="NM_021501.4"/>
</dbReference>
<dbReference type="SMR" id="Q9JM05"/>
<dbReference type="BioGRID" id="208475">
    <property type="interactions" value="6"/>
</dbReference>
<dbReference type="CORUM" id="Q9JM05"/>
<dbReference type="DIP" id="DIP-60971N"/>
<dbReference type="FunCoup" id="Q9JM05">
    <property type="interactions" value="2543"/>
</dbReference>
<dbReference type="IntAct" id="Q9JM05">
    <property type="interactions" value="2"/>
</dbReference>
<dbReference type="STRING" id="10090.ENSMUSP00000005064"/>
<dbReference type="GlyGen" id="Q9JM05">
    <property type="glycosylation" value="1 site"/>
</dbReference>
<dbReference type="iPTMnet" id="Q9JM05"/>
<dbReference type="PhosphoSitePlus" id="Q9JM05"/>
<dbReference type="PaxDb" id="10090-ENSMUSP00000005064"/>
<dbReference type="ProteomicsDB" id="287717"/>
<dbReference type="Pumba" id="Q9JM05"/>
<dbReference type="Antibodypedia" id="1762">
    <property type="antibodies" value="346 antibodies from 38 providers"/>
</dbReference>
<dbReference type="DNASU" id="59004"/>
<dbReference type="Ensembl" id="ENSMUST00000005064.14">
    <property type="protein sequence ID" value="ENSMUSP00000005064.8"/>
    <property type="gene ID" value="ENSMUSG00000004934.15"/>
</dbReference>
<dbReference type="GeneID" id="59004"/>
<dbReference type="KEGG" id="mmu:59004"/>
<dbReference type="UCSC" id="uc007ggc.3">
    <property type="organism name" value="mouse"/>
</dbReference>
<dbReference type="AGR" id="MGI:2136940"/>
<dbReference type="CTD" id="51588"/>
<dbReference type="MGI" id="MGI:2136940">
    <property type="gene designation" value="Pias4"/>
</dbReference>
<dbReference type="VEuPathDB" id="HostDB:ENSMUSG00000004934"/>
<dbReference type="eggNOG" id="KOG2169">
    <property type="taxonomic scope" value="Eukaryota"/>
</dbReference>
<dbReference type="GeneTree" id="ENSGT01030000234539"/>
<dbReference type="InParanoid" id="Q9JM05"/>
<dbReference type="OMA" id="TPIVECK"/>
<dbReference type="OrthoDB" id="10263264at2759"/>
<dbReference type="PhylomeDB" id="Q9JM05"/>
<dbReference type="TreeFam" id="TF323787"/>
<dbReference type="Reactome" id="R-MMU-196791">
    <property type="pathway name" value="Vitamin D (calciferol) metabolism"/>
</dbReference>
<dbReference type="Reactome" id="R-MMU-3108214">
    <property type="pathway name" value="SUMOylation of DNA damage response and repair proteins"/>
</dbReference>
<dbReference type="Reactome" id="R-MMU-3232118">
    <property type="pathway name" value="SUMOylation of transcription factors"/>
</dbReference>
<dbReference type="Reactome" id="R-MMU-3232142">
    <property type="pathway name" value="SUMOylation of ubiquitinylation proteins"/>
</dbReference>
<dbReference type="Reactome" id="R-MMU-3899300">
    <property type="pathway name" value="SUMOylation of transcription cofactors"/>
</dbReference>
<dbReference type="Reactome" id="R-MMU-4085377">
    <property type="pathway name" value="SUMOylation of SUMOylation proteins"/>
</dbReference>
<dbReference type="Reactome" id="R-MMU-4090294">
    <property type="pathway name" value="SUMOylation of intracellular receptors"/>
</dbReference>
<dbReference type="Reactome" id="R-MMU-4615885">
    <property type="pathway name" value="SUMOylation of DNA replication proteins"/>
</dbReference>
<dbReference type="Reactome" id="R-MMU-4755510">
    <property type="pathway name" value="SUMOylation of immune response proteins"/>
</dbReference>
<dbReference type="Reactome" id="R-MMU-5693565">
    <property type="pathway name" value="Recruitment and ATM-mediated phosphorylation of repair and signaling proteins at DNA double strand breaks"/>
</dbReference>
<dbReference type="Reactome" id="R-MMU-5693571">
    <property type="pathway name" value="Nonhomologous End-Joining (NHEJ)"/>
</dbReference>
<dbReference type="Reactome" id="R-MMU-5693607">
    <property type="pathway name" value="Processing of DNA double-strand break ends"/>
</dbReference>
<dbReference type="Reactome" id="R-MMU-69473">
    <property type="pathway name" value="G2/M DNA damage checkpoint"/>
</dbReference>
<dbReference type="UniPathway" id="UPA00886"/>
<dbReference type="BioGRID-ORCS" id="59004">
    <property type="hits" value="5 hits in 78 CRISPR screens"/>
</dbReference>
<dbReference type="ChiTaRS" id="Pias4">
    <property type="organism name" value="mouse"/>
</dbReference>
<dbReference type="PRO" id="PR:Q9JM05"/>
<dbReference type="Proteomes" id="UP000000589">
    <property type="component" value="Chromosome 10"/>
</dbReference>
<dbReference type="RNAct" id="Q9JM05">
    <property type="molecule type" value="protein"/>
</dbReference>
<dbReference type="Bgee" id="ENSMUSG00000004934">
    <property type="expression patterns" value="Expressed in seminiferous tubule of testis and 259 other cell types or tissues"/>
</dbReference>
<dbReference type="ExpressionAtlas" id="Q9JM05">
    <property type="expression patterns" value="baseline and differential"/>
</dbReference>
<dbReference type="GO" id="GO:0005737">
    <property type="term" value="C:cytoplasm"/>
    <property type="evidence" value="ECO:0007669"/>
    <property type="project" value="Ensembl"/>
</dbReference>
<dbReference type="GO" id="GO:0016363">
    <property type="term" value="C:nuclear matrix"/>
    <property type="evidence" value="ECO:0000314"/>
    <property type="project" value="MGI"/>
</dbReference>
<dbReference type="GO" id="GO:0005654">
    <property type="term" value="C:nucleoplasm"/>
    <property type="evidence" value="ECO:0000314"/>
    <property type="project" value="MGI"/>
</dbReference>
<dbReference type="GO" id="GO:0005634">
    <property type="term" value="C:nucleus"/>
    <property type="evidence" value="ECO:0000314"/>
    <property type="project" value="UniProtKB"/>
</dbReference>
<dbReference type="GO" id="GO:0016605">
    <property type="term" value="C:PML body"/>
    <property type="evidence" value="ECO:0007669"/>
    <property type="project" value="UniProtKB-SubCell"/>
</dbReference>
<dbReference type="GO" id="GO:1990234">
    <property type="term" value="C:transferase complex"/>
    <property type="evidence" value="ECO:0000314"/>
    <property type="project" value="BHF-UCL"/>
</dbReference>
<dbReference type="GO" id="GO:0003677">
    <property type="term" value="F:DNA binding"/>
    <property type="evidence" value="ECO:0000314"/>
    <property type="project" value="MGI"/>
</dbReference>
<dbReference type="GO" id="GO:0061665">
    <property type="term" value="F:SUMO ligase activity"/>
    <property type="evidence" value="ECO:0000314"/>
    <property type="project" value="BHF-UCL"/>
</dbReference>
<dbReference type="GO" id="GO:0019789">
    <property type="term" value="F:SUMO transferase activity"/>
    <property type="evidence" value="ECO:0000314"/>
    <property type="project" value="MGI"/>
</dbReference>
<dbReference type="GO" id="GO:0003714">
    <property type="term" value="F:transcription corepressor activity"/>
    <property type="evidence" value="ECO:0000314"/>
    <property type="project" value="MGI"/>
</dbReference>
<dbReference type="GO" id="GO:0031625">
    <property type="term" value="F:ubiquitin protein ligase binding"/>
    <property type="evidence" value="ECO:0000353"/>
    <property type="project" value="BHF-UCL"/>
</dbReference>
<dbReference type="GO" id="GO:0008270">
    <property type="term" value="F:zinc ion binding"/>
    <property type="evidence" value="ECO:0007669"/>
    <property type="project" value="UniProtKB-KW"/>
</dbReference>
<dbReference type="GO" id="GO:0007259">
    <property type="term" value="P:cell surface receptor signaling pathway via JAK-STAT"/>
    <property type="evidence" value="ECO:0000247"/>
    <property type="project" value="MGI"/>
</dbReference>
<dbReference type="GO" id="GO:0007417">
    <property type="term" value="P:central nervous system development"/>
    <property type="evidence" value="ECO:0000270"/>
    <property type="project" value="UniProtKB"/>
</dbReference>
<dbReference type="GO" id="GO:0001942">
    <property type="term" value="P:hair follicle development"/>
    <property type="evidence" value="ECO:0000270"/>
    <property type="project" value="UniProtKB"/>
</dbReference>
<dbReference type="GO" id="GO:0060887">
    <property type="term" value="P:limb epidermis development"/>
    <property type="evidence" value="ECO:0000270"/>
    <property type="project" value="UniProtKB"/>
</dbReference>
<dbReference type="GO" id="GO:0043124">
    <property type="term" value="P:negative regulation of canonical NF-kappaB signal transduction"/>
    <property type="evidence" value="ECO:0000314"/>
    <property type="project" value="BHF-UCL"/>
</dbReference>
<dbReference type="GO" id="GO:0045892">
    <property type="term" value="P:negative regulation of DNA-templated transcription"/>
    <property type="evidence" value="ECO:0000250"/>
    <property type="project" value="UniProtKB"/>
</dbReference>
<dbReference type="GO" id="GO:0120186">
    <property type="term" value="P:negative regulation of protein localization to chromatin"/>
    <property type="evidence" value="ECO:0007669"/>
    <property type="project" value="Ensembl"/>
</dbReference>
<dbReference type="GO" id="GO:0000122">
    <property type="term" value="P:negative regulation of transcription by RNA polymerase II"/>
    <property type="evidence" value="ECO:0000314"/>
    <property type="project" value="BHF-UCL"/>
</dbReference>
<dbReference type="GO" id="GO:0010804">
    <property type="term" value="P:negative regulation of tumor necrosis factor-mediated signaling pathway"/>
    <property type="evidence" value="ECO:0000315"/>
    <property type="project" value="MGI"/>
</dbReference>
<dbReference type="GO" id="GO:1905168">
    <property type="term" value="P:positive regulation of double-strand break repair via homologous recombination"/>
    <property type="evidence" value="ECO:0000250"/>
    <property type="project" value="UniProtKB"/>
</dbReference>
<dbReference type="GO" id="GO:1902231">
    <property type="term" value="P:positive regulation of intrinsic apoptotic signaling pathway in response to DNA damage"/>
    <property type="evidence" value="ECO:0000314"/>
    <property type="project" value="MGI"/>
</dbReference>
<dbReference type="GO" id="GO:1902174">
    <property type="term" value="P:positive regulation of keratinocyte apoptotic process"/>
    <property type="evidence" value="ECO:0000314"/>
    <property type="project" value="BHF-UCL"/>
</dbReference>
<dbReference type="GO" id="GO:0033235">
    <property type="term" value="P:positive regulation of protein sumoylation"/>
    <property type="evidence" value="ECO:0000250"/>
    <property type="project" value="UniProtKB"/>
</dbReference>
<dbReference type="GO" id="GO:0016925">
    <property type="term" value="P:protein sumoylation"/>
    <property type="evidence" value="ECO:0000314"/>
    <property type="project" value="BHF-UCL"/>
</dbReference>
<dbReference type="GO" id="GO:0043488">
    <property type="term" value="P:regulation of mRNA stability"/>
    <property type="evidence" value="ECO:0007669"/>
    <property type="project" value="Ensembl"/>
</dbReference>
<dbReference type="GO" id="GO:0016055">
    <property type="term" value="P:Wnt signaling pathway"/>
    <property type="evidence" value="ECO:0007669"/>
    <property type="project" value="UniProtKB-KW"/>
</dbReference>
<dbReference type="CDD" id="cd16821">
    <property type="entry name" value="SP-RING_PIAS4"/>
    <property type="match status" value="1"/>
</dbReference>
<dbReference type="FunFam" id="3.30.40.10:FF:000003">
    <property type="entry name" value="E3 SUMO-protein ligase PIAS2 isoform X1"/>
    <property type="match status" value="1"/>
</dbReference>
<dbReference type="FunFam" id="1.10.720.30:FF:000009">
    <property type="entry name" value="E3 SUMO-protein ligase PIAS4"/>
    <property type="match status" value="1"/>
</dbReference>
<dbReference type="FunFam" id="2.60.120.780:FF:000002">
    <property type="entry name" value="E3 SUMO-protein ligase PIAS4"/>
    <property type="match status" value="1"/>
</dbReference>
<dbReference type="Gene3D" id="2.60.120.780">
    <property type="entry name" value="PINIT domain"/>
    <property type="match status" value="1"/>
</dbReference>
<dbReference type="Gene3D" id="1.10.720.30">
    <property type="entry name" value="SAP domain"/>
    <property type="match status" value="1"/>
</dbReference>
<dbReference type="Gene3D" id="3.30.40.10">
    <property type="entry name" value="Zinc/RING finger domain, C3HC4 (zinc finger)"/>
    <property type="match status" value="1"/>
</dbReference>
<dbReference type="InterPro" id="IPR023321">
    <property type="entry name" value="PINIT"/>
</dbReference>
<dbReference type="InterPro" id="IPR038654">
    <property type="entry name" value="PINIT_sf"/>
</dbReference>
<dbReference type="InterPro" id="IPR003034">
    <property type="entry name" value="SAP_dom"/>
</dbReference>
<dbReference type="InterPro" id="IPR036361">
    <property type="entry name" value="SAP_dom_sf"/>
</dbReference>
<dbReference type="InterPro" id="IPR004181">
    <property type="entry name" value="Znf_MIZ"/>
</dbReference>
<dbReference type="InterPro" id="IPR013083">
    <property type="entry name" value="Znf_RING/FYVE/PHD"/>
</dbReference>
<dbReference type="PANTHER" id="PTHR10782:SF9">
    <property type="entry name" value="E3 SUMO-PROTEIN LIGASE PIAS4"/>
    <property type="match status" value="1"/>
</dbReference>
<dbReference type="PANTHER" id="PTHR10782">
    <property type="entry name" value="ZINC FINGER MIZ DOMAIN-CONTAINING PROTEIN"/>
    <property type="match status" value="1"/>
</dbReference>
<dbReference type="Pfam" id="PF14324">
    <property type="entry name" value="PINIT"/>
    <property type="match status" value="1"/>
</dbReference>
<dbReference type="Pfam" id="PF02037">
    <property type="entry name" value="SAP"/>
    <property type="match status" value="1"/>
</dbReference>
<dbReference type="Pfam" id="PF02891">
    <property type="entry name" value="zf-MIZ"/>
    <property type="match status" value="1"/>
</dbReference>
<dbReference type="SMART" id="SM00513">
    <property type="entry name" value="SAP"/>
    <property type="match status" value="1"/>
</dbReference>
<dbReference type="SUPFAM" id="SSF68906">
    <property type="entry name" value="SAP domain"/>
    <property type="match status" value="1"/>
</dbReference>
<dbReference type="PROSITE" id="PS51466">
    <property type="entry name" value="PINIT"/>
    <property type="match status" value="1"/>
</dbReference>
<dbReference type="PROSITE" id="PS50800">
    <property type="entry name" value="SAP"/>
    <property type="match status" value="1"/>
</dbReference>
<dbReference type="PROSITE" id="PS51044">
    <property type="entry name" value="ZF_SP_RING"/>
    <property type="match status" value="1"/>
</dbReference>
<comment type="function">
    <text evidence="1 7">Functions as an E3-type small ubiquitin-like modifier (SUMO) ligase, stabilizing the interaction between UBE2I and the substrate, and as a SUMO-tethering factor (By similarity). Mediates sumoylation of ALKBH5, AXIN1, CEBPA, KLF8, GATA2, PARK7, HERC2, MYB, TCF4 and RNF168 (By similarity). Plays a crucial role as a transcriptional coregulation in various cellular pathways, including the STAT pathway, the p53/TP53 pathway, the Wnt pathway and the steroid hormone signaling pathway (By similarity). Involved in gene silencing (By similarity). In Wnt signaling, represses LEF1 and enhances TCF4 transcriptional activities through promoting their sumoylations (By similarity). Enhances the sumoylation of MTA1 and may participate in its paralog-selective sumoylation (By similarity). Binds to AT-rich DNA sequences, known as matrix or scaffold attachment regions (MARs/SARs) (PubMed:11731474). Catalyzes conjugation of SUMO2 to KAT5 in response to DNA damage, facilitating repair of DNA double-strand breaks (DSBs) via homologous recombination (HR) (By similarity). Mediates sumoylation of PARP1 in response to PARP1 trapping to chromatin (By similarity). Mediates sumoylation of KLF8, repressiing KLF8 transcriptional activity and cell cycle progression into G(1) phase (By similarity). Sumoylates ALKBH5 downstream of MAPK8/JNK1 and MAPK9/JNK2 in response to reactive oxygen species (ROS), inhibiting ALKBH5 RNA demethylase activity (By similarity).</text>
</comment>
<comment type="catalytic activity">
    <reaction evidence="1">
        <text>S-ubiquitinyl-[E2 ubiquitin-conjugating enzyme]-L-cysteine + [acceptor protein]-L-lysine = [E2 ubiquitin-conjugating enzyme]-L-cysteine + N(6)-ubiquitinyl-[acceptor protein]-L-lysine.</text>
        <dbReference type="EC" id="2.3.2.27"/>
    </reaction>
</comment>
<comment type="pathway">
    <text evidence="1">Protein modification; protein sumoylation.</text>
</comment>
<comment type="subunit">
    <text evidence="1 7 10">Interacts with AR, GATA2, LEF1, TP53 and STAT1 (IFNG-induced) (PubMed:11731474). Interacts with TICAM1 (By similarity). Interacts with MTA1 (By similarity). Interacts with PRDM1/Blimp-1 (By similarity). Interacts with TRIM32 upon treatment with UVB and TNF-alpha (PubMed:16816390).</text>
</comment>
<comment type="subunit">
    <text evidence="9">(Microbial infection) Interacts ewith Moloney murine leukemia virus Capsid protein p30.</text>
</comment>
<comment type="subcellular location">
    <subcellularLocation>
        <location evidence="7 10">Nucleus</location>
        <location evidence="7 10">PML body</location>
    </subcellularLocation>
    <text evidence="1">Colocalizes with SUMO1 and TCF7L2/TCF4 and LEF1 in a subset of PML (promyelocytic leukemia) nuclear bodies. Accumulates in the cytoplasm upon treatment with UVB and TNF-alpha.</text>
</comment>
<comment type="tissue specificity">
    <text evidence="6 8">Widely expressed, with highest levels in testis. Also expressed in vascular endothelial cells, in primary keratinocytes and in the CNS, including cortex, olfactory bulb, spinal cord, thalamus and trigeminal ganglion. Low expression, if any, in liver and lung.</text>
</comment>
<comment type="developmental stage">
    <text evidence="6">At 8.5 dpc, expressed primarily in the anterior part of the neural tube. At 10.5 dpc, expressed in the neuroepithelium of the forebrain and hindbrain. At 11.5 dpc, detected in the neural tube, eye, limb buds and brachial arches. At 12.5 dpc, expressed in the hindlimbs and forelimbs, as well as in the forebrain. At 12.5 and 13.5 dpc, detected in single cells in the marginal zone of the developing cortex, as well as in other developing tissues and organs. At 13.5 dpc, expressed in the developing limb buds, in single cells in the mesenchyme surrounding future digit structures. At 15.5 dpc, detected in the inner root sheath of vibrissa hair follicle. Expression in the inner root sheath of the hair follicle continues later in life as it can also be detected in the back skin of newborn at postnatal day 3. At 16.5 dpc, expressed in the epithelium of olfactory and in the retina.</text>
</comment>
<comment type="domain">
    <text evidence="1">The LXXLL motif is a coregulator signature that is essential for transcriptional corepression.</text>
</comment>
<comment type="PTM">
    <text evidence="7">Sumoylated. Lys-35 is the main site of sumoylation. Sumoylation is required for TCF4 sumoylation and transcriptional activation. Represses LEF1 transcriptional activity. SUMO1 is the preferred conjugate.</text>
</comment>
<comment type="PTM">
    <text evidence="10">Ubiquitinated by TRIM32 upon treatment with UVB and TNF-alpha.</text>
</comment>
<comment type="similarity">
    <text evidence="12">Belongs to the PIAS family.</text>
</comment>
<sequence length="507" mass="55570">MAAELVEAKNMVMSFRVSDLQMLLGFVGRSKSGLKHELVTRALQLVQFDCSPELFKKIKELYETRYAKKSAEPGPQAPRPLDPLALHSMPRTPLSGPTVDYPVLYGKYLNGLGRLPTKTLKPEVRLVKLPFFNMLDELLKPTELVPQSAEKLQESPCIFALTPRQVEMIRNSRELQPGVKAVQVVLRICYSDTSCPQEDQYPPNIAVKVNHSYCSVPGYYPSNKPGVEPKRPCRPINLTHLMYLSSATNRITVTWGNYGKSYSVALYLVRQLTSSDLLQRLKTIGVKHPELCKALVKEKLRLDPDSEIATTGVRVSLICPLVKMRLSVPCRAETCAHLQCFDAVFYLQMNEKKPTWMCPVCDKPAAYDQLIIDGLLSKILSECEGADEIEFLAEGSWRPIRAEKEPSCSPQGPILVLGTSDANGLAPASSTPGIGSGLSGPGSAGSGAGAAGSLENGKTGADVVDLTLDSSSSSEDEDEDEDDDEDEDEGPRPKRRCPFQKGLVPAC</sequence>
<gene>
    <name type="primary">Pias4</name>
    <name type="synonym">Piasg</name>
</gene>
<proteinExistence type="evidence at protein level"/>
<name>PIAS4_MOUSE</name>
<evidence type="ECO:0000250" key="1">
    <source>
        <dbReference type="UniProtKB" id="Q8N2W9"/>
    </source>
</evidence>
<evidence type="ECO:0000255" key="2">
    <source>
        <dbReference type="PROSITE-ProRule" id="PRU00186"/>
    </source>
</evidence>
<evidence type="ECO:0000255" key="3">
    <source>
        <dbReference type="PROSITE-ProRule" id="PRU00452"/>
    </source>
</evidence>
<evidence type="ECO:0000255" key="4">
    <source>
        <dbReference type="PROSITE-ProRule" id="PRU00799"/>
    </source>
</evidence>
<evidence type="ECO:0000256" key="5">
    <source>
        <dbReference type="SAM" id="MobiDB-lite"/>
    </source>
</evidence>
<evidence type="ECO:0000269" key="6">
    <source>
    </source>
</evidence>
<evidence type="ECO:0000269" key="7">
    <source>
    </source>
</evidence>
<evidence type="ECO:0000269" key="8">
    <source>
    </source>
</evidence>
<evidence type="ECO:0000269" key="9">
    <source>
    </source>
</evidence>
<evidence type="ECO:0000269" key="10">
    <source>
    </source>
</evidence>
<evidence type="ECO:0000303" key="11">
    <source>
    </source>
</evidence>
<evidence type="ECO:0000305" key="12"/>
<evidence type="ECO:0000312" key="13">
    <source>
        <dbReference type="EMBL" id="AAF72040.1"/>
    </source>
</evidence>
<accession>Q9JM05</accession>
<accession>Q8R165</accession>
<feature type="initiator methionine" description="Removed" evidence="1">
    <location>
        <position position="1"/>
    </location>
</feature>
<feature type="chain" id="PRO_0000218983" description="E3 SUMO-protein ligase PIAS4">
    <location>
        <begin position="2"/>
        <end position="507"/>
    </location>
</feature>
<feature type="domain" description="SAP" evidence="2 12">
    <location>
        <begin position="12"/>
        <end position="46"/>
    </location>
</feature>
<feature type="domain" description="PINIT" evidence="4">
    <location>
        <begin position="112"/>
        <end position="272"/>
    </location>
</feature>
<feature type="zinc finger region" description="SP-RING-type" evidence="3">
    <location>
        <begin position="304"/>
        <end position="385"/>
    </location>
</feature>
<feature type="region of interest" description="Disordered" evidence="5">
    <location>
        <begin position="426"/>
        <end position="507"/>
    </location>
</feature>
<feature type="short sequence motif" description="LXXLL motif">
    <location>
        <begin position="20"/>
        <end position="24"/>
    </location>
</feature>
<feature type="compositionally biased region" description="Gly residues" evidence="5">
    <location>
        <begin position="434"/>
        <end position="450"/>
    </location>
</feature>
<feature type="compositionally biased region" description="Acidic residues" evidence="5">
    <location>
        <begin position="474"/>
        <end position="489"/>
    </location>
</feature>
<feature type="binding site" evidence="3">
    <location>
        <position position="335"/>
    </location>
    <ligand>
        <name>Zn(2+)</name>
        <dbReference type="ChEBI" id="CHEBI:29105"/>
    </ligand>
</feature>
<feature type="binding site" evidence="3">
    <location>
        <position position="337"/>
    </location>
    <ligand>
        <name>Zn(2+)</name>
        <dbReference type="ChEBI" id="CHEBI:29105"/>
    </ligand>
</feature>
<feature type="binding site" evidence="3">
    <location>
        <position position="358"/>
    </location>
    <ligand>
        <name>Zn(2+)</name>
        <dbReference type="ChEBI" id="CHEBI:29105"/>
    </ligand>
</feature>
<feature type="binding site" evidence="3">
    <location>
        <position position="361"/>
    </location>
    <ligand>
        <name>Zn(2+)</name>
        <dbReference type="ChEBI" id="CHEBI:29105"/>
    </ligand>
</feature>
<feature type="modified residue" description="N-acetylalanine" evidence="1">
    <location>
        <position position="2"/>
    </location>
</feature>
<feature type="modified residue" description="N6-acetyllysine" evidence="1">
    <location>
        <position position="107"/>
    </location>
</feature>
<feature type="cross-link" description="Glycyl lysine isopeptide (Lys-Gly) (interchain with G-Cter in SUMO2)" evidence="1">
    <location>
        <position position="9"/>
    </location>
</feature>
<feature type="cross-link" description="Glycyl lysine isopeptide (Lys-Gly) (interchain with G-Cter in SUMO); alternate" evidence="1">
    <location>
        <position position="35"/>
    </location>
</feature>
<feature type="cross-link" description="Glycyl lysine isopeptide (Lys-Gly) (interchain with G-Cter in SUMO2); alternate" evidence="1">
    <location>
        <position position="35"/>
    </location>
</feature>
<feature type="cross-link" description="Glycyl lysine isopeptide (Lys-Gly) (interchain with G-Cter in SUMO2)" evidence="1">
    <location>
        <position position="56"/>
    </location>
</feature>
<feature type="cross-link" description="Glycyl lysine isopeptide (Lys-Gly) (interchain with G-Cter in SUMO2)" evidence="1">
    <location>
        <position position="59"/>
    </location>
</feature>
<feature type="cross-link" description="Glycyl lysine isopeptide (Lys-Gly) (interchain with G-Cter in SUMO2)" evidence="1">
    <location>
        <position position="68"/>
    </location>
</feature>
<feature type="cross-link" description="Glycyl lysine isopeptide (Lys-Gly) (interchain with G-Cter in SUMO2)" evidence="1">
    <location>
        <position position="69"/>
    </location>
</feature>
<feature type="cross-link" description="Glycyl lysine isopeptide (Lys-Gly) (interchain with G-Cter in SUMO2)" evidence="1">
    <location>
        <position position="118"/>
    </location>
</feature>
<feature type="cross-link" description="Glycyl lysine isopeptide (Lys-Gly) (interchain with G-Cter in SUMO)" evidence="1">
    <location>
        <position position="128"/>
    </location>
</feature>
<feature type="mutagenesis site" description="Abrogates sumoylation of LEF1 and increases LEF1-mediated transcriptional activity; when associated with S-335; A-337 and S-340." evidence="7">
    <original>C</original>
    <variation>S</variation>
    <location>
        <position position="330"/>
    </location>
</feature>
<feature type="mutagenesis site" description="Abrogates sumoylation of LEF1 and increases LEF1-mediated transcriptional activity; when associated with S-330; A-337 and S-340." evidence="7">
    <original>C</original>
    <variation>S</variation>
    <location>
        <position position="335"/>
    </location>
</feature>
<feature type="mutagenesis site" description="Abrogates sumoylation of LEF1 and increases LEF1-mediated transcriptional activity; when associated with S-330; S-335 and S-340." evidence="7">
    <original>H</original>
    <variation>A</variation>
    <location>
        <position position="337"/>
    </location>
</feature>
<feature type="mutagenesis site" description="Abrogates sumoylation of LEF1 and increases LEF1-mediated transcriptional activity; when associated with S-330; S-335 and A-337." evidence="7">
    <original>C</original>
    <variation>S</variation>
    <location>
        <position position="340"/>
    </location>
</feature>
<feature type="mutagenesis site" description="No effect on sumoylation of LEF1, nor on LEF1-binding." evidence="7">
    <original>SSSSS</original>
    <variation>AAAAA</variation>
    <location>
        <begin position="470"/>
        <end position="474"/>
    </location>
</feature>
<feature type="sequence conflict" description="In Ref. 1; AAF72040." evidence="12" ref="1">
    <original>K</original>
    <variation>N</variation>
    <location>
        <position position="230"/>
    </location>
</feature>
<feature type="sequence conflict" description="In Ref. 1; AAF72040." evidence="12" ref="1">
    <original>L</original>
    <variation>H</variation>
    <location>
        <position position="417"/>
    </location>
</feature>
<feature type="sequence conflict" description="In Ref. 1; AAF72040." evidence="12" ref="1">
    <original>K</original>
    <variation>N</variation>
    <location>
        <position position="494"/>
    </location>
</feature>
<protein>
    <recommendedName>
        <fullName>E3 SUMO-protein ligase PIAS4</fullName>
        <ecNumber>2.3.2.27</ecNumber>
    </recommendedName>
    <alternativeName>
        <fullName evidence="11">PIASy</fullName>
    </alternativeName>
    <alternativeName>
        <fullName>Protein inhibitor of activated STAT protein 4</fullName>
    </alternativeName>
    <alternativeName>
        <fullName>Protein inhibitor of activated STAT protein gamma</fullName>
        <shortName>PIAS-gamma</shortName>
    </alternativeName>
</protein>
<reference evidence="12" key="1">
    <citation type="journal article" date="2000" name="J. Mol. Neurosci.">
        <title>Cloning and analysis of a murine Pias family member, Pias-gamma, in developing skin and neurons.</title>
        <authorList>
            <person name="Sturm S."/>
            <person name="Koch M."/>
            <person name="White F.A."/>
        </authorList>
    </citation>
    <scope>NUCLEOTIDE SEQUENCE [MRNA]</scope>
    <scope>TISSUE SPECIFICITY</scope>
    <scope>DEVELOPMENTAL STAGE</scope>
    <source>
        <tissue>Brain</tissue>
    </source>
</reference>
<reference key="2">
    <citation type="journal article" date="2004" name="Genome Res.">
        <title>The status, quality, and expansion of the NIH full-length cDNA project: the Mammalian Gene Collection (MGC).</title>
        <authorList>
            <consortium name="The MGC Project Team"/>
        </authorList>
    </citation>
    <scope>NUCLEOTIDE SEQUENCE [LARGE SCALE MRNA]</scope>
    <source>
        <tissue>Kidney</tissue>
    </source>
</reference>
<reference evidence="12" key="3">
    <citation type="journal article" date="2001" name="Genes Dev.">
        <title>PIASy, a nuclear matrix-associated SUMO E3 ligase, represses LEF1 activity by sequestration into nuclear bodies.</title>
        <authorList>
            <person name="Sachdev S."/>
            <person name="Bruhn L."/>
            <person name="Sieber H."/>
            <person name="Pichler A."/>
            <person name="Melchior F."/>
            <person name="Grosschedl R."/>
        </authorList>
    </citation>
    <scope>FUNCTION</scope>
    <scope>INTERACTION WITH LEF1</scope>
    <scope>DNA-BINDING</scope>
    <scope>SUMOYLATION</scope>
    <scope>SUBCELLULAR LOCATION</scope>
    <scope>MUTAGENESIS OF CYS-330; CYS-335; HIS-337; CYS-340 AND 470-SER--SER-474</scope>
</reference>
<reference key="4">
    <citation type="journal article" date="2003" name="Circ. Res.">
        <title>Modification of GATA-2 transcriptional activity in endothelial cells by the SUMO E3 ligase PIASy.</title>
        <authorList>
            <person name="Chun T.-H."/>
            <person name="Itoh H."/>
            <person name="Subramanian L."/>
            <person name="Iniguez-Lluhi J.A."/>
            <person name="Nakao K."/>
        </authorList>
    </citation>
    <scope>TISSUE SPECIFICITY</scope>
</reference>
<reference key="5">
    <citation type="journal article" date="2006" name="J. Biol. Chem.">
        <title>The interaction of Piasy with Trim32, an E3-ubiquitin ligase mutated in limb-girdle muscular dystrophy type 2H, promotes Piasy degradation and regulates UVB-induced keratinocyte apoptosis through NFkappaB.</title>
        <authorList>
            <person name="Albor A."/>
            <person name="El-Hizawi S."/>
            <person name="Horn E.J."/>
            <person name="Laederich M."/>
            <person name="Frosk P."/>
            <person name="Wrogemann K."/>
            <person name="Kulesz-Martin M."/>
        </authorList>
    </citation>
    <scope>SUBCELLULAR LOCATION</scope>
    <scope>INTERACTION WITH TRIM32</scope>
    <scope>UBIQUITINATION</scope>
</reference>
<reference key="6">
    <citation type="journal article" date="2006" name="J. Virol.">
        <title>Interaction of moloney murine leukemia virus capsid with Ubc9 and PIASy mediates SUMO-1 addition required early in infection.</title>
        <authorList>
            <person name="Yueh A."/>
            <person name="Leung J."/>
            <person name="Bhattacharyya S."/>
            <person name="Perrone L.A."/>
            <person name="de los Santos K."/>
            <person name="Pu S.-Y."/>
            <person name="Goff S.P."/>
        </authorList>
    </citation>
    <scope>INTERACTION WITH MOMLV CA</scope>
</reference>
<reference key="7">
    <citation type="journal article" date="2010" name="Cell">
        <title>A tissue-specific atlas of mouse protein phosphorylation and expression.</title>
        <authorList>
            <person name="Huttlin E.L."/>
            <person name="Jedrychowski M.P."/>
            <person name="Elias J.E."/>
            <person name="Goswami T."/>
            <person name="Rad R."/>
            <person name="Beausoleil S.A."/>
            <person name="Villen J."/>
            <person name="Haas W."/>
            <person name="Sowa M.E."/>
            <person name="Gygi S.P."/>
        </authorList>
    </citation>
    <scope>IDENTIFICATION BY MASS SPECTROMETRY [LARGE SCALE ANALYSIS]</scope>
    <source>
        <tissue>Testis</tissue>
    </source>
</reference>
<keyword id="KW-0007">Acetylation</keyword>
<keyword id="KW-0238">DNA-binding</keyword>
<keyword id="KW-0945">Host-virus interaction</keyword>
<keyword id="KW-1017">Isopeptide bond</keyword>
<keyword id="KW-0479">Metal-binding</keyword>
<keyword id="KW-0539">Nucleus</keyword>
<keyword id="KW-1185">Reference proteome</keyword>
<keyword id="KW-0678">Repressor</keyword>
<keyword id="KW-0804">Transcription</keyword>
<keyword id="KW-0805">Transcription regulation</keyword>
<keyword id="KW-0808">Transferase</keyword>
<keyword id="KW-0832">Ubl conjugation</keyword>
<keyword id="KW-0833">Ubl conjugation pathway</keyword>
<keyword id="KW-0879">Wnt signaling pathway</keyword>
<keyword id="KW-0862">Zinc</keyword>
<keyword id="KW-0863">Zinc-finger</keyword>